<evidence type="ECO:0000250" key="1">
    <source>
        <dbReference type="UniProtKB" id="P20711"/>
    </source>
</evidence>
<evidence type="ECO:0000250" key="2">
    <source>
        <dbReference type="UniProtKB" id="P80041"/>
    </source>
</evidence>
<evidence type="ECO:0000305" key="3"/>
<name>DDC_CAVPO</name>
<sequence>MNASEFRRRGKEMVDYVANYLEGIESRLVYPDVEPGYLRPLIPSSAPEEPETYEDIIGDIERIIMPGVTHWNSPYFFAYFPTANSYPSMLADMLCGAISCIGFSWAASPACTELETVMLDWLGKMLRLPDAFLAGNAGMGGGVIQGSASEATLVALLAARTKVIRRLQAASPELTQAAIMEKLVAYASDQAHSSVERAGLIGGVRMKLIPSDSNFAMRASALREALERDKAAGLIPFFVVATLGTTNCCSFDSLLEVGPICNQEEMWLHIDAAYAGSAFICPEFRHLLDGVEFADSFNFNPHKWLLVNFDCSAMWVKQRTDLIGAFKLDPVYLKHGHQDSGLITDYRHWQIPLGRRFRSLKMWFVFRMYGIKGLQAHIRKHVQLAHEFESLVRQDPRFEICMEVTLGLVCFRLKGSNQLNETLLKRINSARKIHLVPCHLRDKFVLRFRICSRQVESDHVQQAWQHIRQLASSVLRLERA</sequence>
<reference key="1">
    <citation type="journal article" date="1990" name="Biochem. Biophys. Res. Commun.">
        <title>Molecular cloning of guinea-pig aromatic-L-amino acid decarboxylase cDNA.</title>
        <authorList>
            <person name="Taketoshi M."/>
            <person name="Horio Y."/>
            <person name="Imamura I."/>
            <person name="Tanaka T."/>
            <person name="Fukui H."/>
            <person name="Wada H."/>
        </authorList>
    </citation>
    <scope>NUCLEOTIDE SEQUENCE [MRNA]</scope>
</reference>
<comment type="function">
    <text evidence="2">Catalyzes the decarboxylation of L-3,4-dihydroxyphenylalanine (DOPA) to dopamine and L-5-hydroxytryptophan to serotonin.</text>
</comment>
<comment type="catalytic activity">
    <reaction evidence="2">
        <text>L-dopa + H(+) = dopamine + CO2</text>
        <dbReference type="Rhea" id="RHEA:12272"/>
        <dbReference type="ChEBI" id="CHEBI:15378"/>
        <dbReference type="ChEBI" id="CHEBI:16526"/>
        <dbReference type="ChEBI" id="CHEBI:57504"/>
        <dbReference type="ChEBI" id="CHEBI:59905"/>
        <dbReference type="EC" id="4.1.1.28"/>
    </reaction>
</comment>
<comment type="catalytic activity">
    <reaction evidence="2">
        <text>5-hydroxy-L-tryptophan + H(+) = serotonin + CO2</text>
        <dbReference type="Rhea" id="RHEA:18533"/>
        <dbReference type="ChEBI" id="CHEBI:15378"/>
        <dbReference type="ChEBI" id="CHEBI:16526"/>
        <dbReference type="ChEBI" id="CHEBI:58266"/>
        <dbReference type="ChEBI" id="CHEBI:350546"/>
        <dbReference type="EC" id="4.1.1.28"/>
    </reaction>
</comment>
<comment type="cofactor">
    <cofactor evidence="1">
        <name>pyridoxal 5'-phosphate</name>
        <dbReference type="ChEBI" id="CHEBI:597326"/>
    </cofactor>
</comment>
<comment type="pathway">
    <text evidence="2">Catecholamine biosynthesis; dopamine biosynthesis; dopamine from L-tyrosine: step 2/2.</text>
</comment>
<comment type="subunit">
    <text evidence="1">Homodimer.</text>
</comment>
<comment type="similarity">
    <text evidence="3">Belongs to the group II decarboxylase family.</text>
</comment>
<protein>
    <recommendedName>
        <fullName>Aromatic-L-amino-acid decarboxylase</fullName>
        <shortName>AADC</shortName>
        <ecNumber evidence="2">4.1.1.28</ecNumber>
    </recommendedName>
    <alternativeName>
        <fullName>DOPA decarboxylase</fullName>
        <shortName>DDC</shortName>
    </alternativeName>
</protein>
<dbReference type="EC" id="4.1.1.28" evidence="2"/>
<dbReference type="EMBL" id="M58049">
    <property type="protein sequence ID" value="AAA51530.1"/>
    <property type="molecule type" value="mRNA"/>
</dbReference>
<dbReference type="PIR" id="A35710">
    <property type="entry name" value="DEGPA"/>
</dbReference>
<dbReference type="RefSeq" id="NP_001166414.1">
    <property type="nucleotide sequence ID" value="NM_001172943.1"/>
</dbReference>
<dbReference type="SMR" id="P22781"/>
<dbReference type="FunCoup" id="P22781">
    <property type="interactions" value="137"/>
</dbReference>
<dbReference type="STRING" id="10141.ENSCPOP00000004824"/>
<dbReference type="GeneID" id="100135516"/>
<dbReference type="KEGG" id="cpoc:100135516"/>
<dbReference type="CTD" id="1644"/>
<dbReference type="eggNOG" id="KOG0628">
    <property type="taxonomic scope" value="Eukaryota"/>
</dbReference>
<dbReference type="InParanoid" id="P22781"/>
<dbReference type="OrthoDB" id="639767at2759"/>
<dbReference type="UniPathway" id="UPA00747">
    <property type="reaction ID" value="UER00734"/>
</dbReference>
<dbReference type="Proteomes" id="UP000005447">
    <property type="component" value="Unassembled WGS sequence"/>
</dbReference>
<dbReference type="GO" id="GO:0005737">
    <property type="term" value="C:cytoplasm"/>
    <property type="evidence" value="ECO:0007669"/>
    <property type="project" value="TreeGrafter"/>
</dbReference>
<dbReference type="GO" id="GO:0036467">
    <property type="term" value="F:5-hydroxy-L-tryptophan decarboxylase activity"/>
    <property type="evidence" value="ECO:0007669"/>
    <property type="project" value="RHEA"/>
</dbReference>
<dbReference type="GO" id="GO:0036468">
    <property type="term" value="F:L-dopa decarboxylase activity"/>
    <property type="evidence" value="ECO:0007669"/>
    <property type="project" value="RHEA"/>
</dbReference>
<dbReference type="GO" id="GO:0030170">
    <property type="term" value="F:pyridoxal phosphate binding"/>
    <property type="evidence" value="ECO:0007669"/>
    <property type="project" value="InterPro"/>
</dbReference>
<dbReference type="GO" id="GO:0006520">
    <property type="term" value="P:amino acid metabolic process"/>
    <property type="evidence" value="ECO:0007669"/>
    <property type="project" value="InterPro"/>
</dbReference>
<dbReference type="GO" id="GO:0019752">
    <property type="term" value="P:carboxylic acid metabolic process"/>
    <property type="evidence" value="ECO:0007669"/>
    <property type="project" value="InterPro"/>
</dbReference>
<dbReference type="GO" id="GO:0042416">
    <property type="term" value="P:dopamine biosynthetic process"/>
    <property type="evidence" value="ECO:0007669"/>
    <property type="project" value="UniProtKB-UniPathway"/>
</dbReference>
<dbReference type="GO" id="GO:0042427">
    <property type="term" value="P:serotonin biosynthetic process"/>
    <property type="evidence" value="ECO:0007669"/>
    <property type="project" value="TreeGrafter"/>
</dbReference>
<dbReference type="CDD" id="cd06450">
    <property type="entry name" value="DOPA_deC_like"/>
    <property type="match status" value="1"/>
</dbReference>
<dbReference type="FunFam" id="1.20.1340.10:FF:000001">
    <property type="entry name" value="Histidine decarboxylase"/>
    <property type="match status" value="1"/>
</dbReference>
<dbReference type="FunFam" id="3.40.640.10:FF:000025">
    <property type="entry name" value="Histidine decarboxylase"/>
    <property type="match status" value="1"/>
</dbReference>
<dbReference type="FunFam" id="3.90.1150.10:FF:000018">
    <property type="entry name" value="Histidine decarboxylase"/>
    <property type="match status" value="1"/>
</dbReference>
<dbReference type="Gene3D" id="3.90.1150.10">
    <property type="entry name" value="Aspartate Aminotransferase, domain 1"/>
    <property type="match status" value="1"/>
</dbReference>
<dbReference type="Gene3D" id="1.20.1340.10">
    <property type="entry name" value="dopa decarboxylase, N-terminal domain"/>
    <property type="match status" value="1"/>
</dbReference>
<dbReference type="Gene3D" id="3.40.640.10">
    <property type="entry name" value="Type I PLP-dependent aspartate aminotransferase-like (Major domain)"/>
    <property type="match status" value="1"/>
</dbReference>
<dbReference type="InterPro" id="IPR010977">
    <property type="entry name" value="Aromatic_deC"/>
</dbReference>
<dbReference type="InterPro" id="IPR002129">
    <property type="entry name" value="PyrdxlP-dep_de-COase"/>
</dbReference>
<dbReference type="InterPro" id="IPR015424">
    <property type="entry name" value="PyrdxlP-dep_Trfase"/>
</dbReference>
<dbReference type="InterPro" id="IPR015421">
    <property type="entry name" value="PyrdxlP-dep_Trfase_major"/>
</dbReference>
<dbReference type="InterPro" id="IPR015422">
    <property type="entry name" value="PyrdxlP-dep_Trfase_small"/>
</dbReference>
<dbReference type="InterPro" id="IPR021115">
    <property type="entry name" value="Pyridoxal-P_BS"/>
</dbReference>
<dbReference type="PANTHER" id="PTHR11999:SF167">
    <property type="entry name" value="AROMATIC-L-AMINO-ACID DECARBOXYLASE"/>
    <property type="match status" value="1"/>
</dbReference>
<dbReference type="PANTHER" id="PTHR11999">
    <property type="entry name" value="GROUP II PYRIDOXAL-5-PHOSPHATE DECARBOXYLASE"/>
    <property type="match status" value="1"/>
</dbReference>
<dbReference type="Pfam" id="PF00282">
    <property type="entry name" value="Pyridoxal_deC"/>
    <property type="match status" value="1"/>
</dbReference>
<dbReference type="PRINTS" id="PR00800">
    <property type="entry name" value="YHDCRBOXLASE"/>
</dbReference>
<dbReference type="SUPFAM" id="SSF53383">
    <property type="entry name" value="PLP-dependent transferases"/>
    <property type="match status" value="1"/>
</dbReference>
<dbReference type="PROSITE" id="PS00392">
    <property type="entry name" value="DDC_GAD_HDC_YDC"/>
    <property type="match status" value="1"/>
</dbReference>
<feature type="chain" id="PRO_0000146938" description="Aromatic-L-amino-acid decarboxylase">
    <location>
        <begin position="1"/>
        <end position="480"/>
    </location>
</feature>
<feature type="repeat" description="1">
    <location>
        <begin position="58"/>
        <end position="115"/>
    </location>
</feature>
<feature type="repeat" description="2">
    <location>
        <begin position="118"/>
        <end position="178"/>
    </location>
</feature>
<feature type="region of interest" description="2 X approximate tandem repeats">
    <location>
        <begin position="58"/>
        <end position="178"/>
    </location>
</feature>
<feature type="binding site" evidence="2">
    <location>
        <position position="82"/>
    </location>
    <ligand>
        <name>substrate</name>
    </ligand>
</feature>
<feature type="binding site" evidence="1">
    <location>
        <position position="148"/>
    </location>
    <ligand>
        <name>pyridoxal 5'-phosphate</name>
        <dbReference type="ChEBI" id="CHEBI:597326"/>
    </ligand>
</feature>
<feature type="binding site" evidence="1">
    <location>
        <position position="149"/>
    </location>
    <ligand>
        <name>pyridoxal 5'-phosphate</name>
        <dbReference type="ChEBI" id="CHEBI:597326"/>
    </ligand>
</feature>
<feature type="binding site" evidence="2">
    <location>
        <position position="192"/>
    </location>
    <ligand>
        <name>substrate</name>
    </ligand>
</feature>
<feature type="binding site" evidence="1">
    <location>
        <position position="246"/>
    </location>
    <ligand>
        <name>pyridoxal 5'-phosphate</name>
        <dbReference type="ChEBI" id="CHEBI:597326"/>
    </ligand>
</feature>
<feature type="binding site" evidence="1">
    <location>
        <position position="300"/>
    </location>
    <ligand>
        <name>pyridoxal 5'-phosphate</name>
        <dbReference type="ChEBI" id="CHEBI:597326"/>
    </ligand>
</feature>
<feature type="modified residue" description="N-acetylmethionine" evidence="2">
    <location>
        <position position="1"/>
    </location>
</feature>
<feature type="modified residue" description="N6-(pyridoxal phosphate)lysine" evidence="2">
    <location>
        <position position="303"/>
    </location>
</feature>
<gene>
    <name type="primary">DDC</name>
</gene>
<accession>P22781</accession>
<organism>
    <name type="scientific">Cavia porcellus</name>
    <name type="common">Guinea pig</name>
    <dbReference type="NCBI Taxonomy" id="10141"/>
    <lineage>
        <taxon>Eukaryota</taxon>
        <taxon>Metazoa</taxon>
        <taxon>Chordata</taxon>
        <taxon>Craniata</taxon>
        <taxon>Vertebrata</taxon>
        <taxon>Euteleostomi</taxon>
        <taxon>Mammalia</taxon>
        <taxon>Eutheria</taxon>
        <taxon>Euarchontoglires</taxon>
        <taxon>Glires</taxon>
        <taxon>Rodentia</taxon>
        <taxon>Hystricomorpha</taxon>
        <taxon>Caviidae</taxon>
        <taxon>Cavia</taxon>
    </lineage>
</organism>
<keyword id="KW-0007">Acetylation</keyword>
<keyword id="KW-0127">Catecholamine biosynthesis</keyword>
<keyword id="KW-0210">Decarboxylase</keyword>
<keyword id="KW-0456">Lyase</keyword>
<keyword id="KW-0663">Pyridoxal phosphate</keyword>
<keyword id="KW-1185">Reference proteome</keyword>
<keyword id="KW-0677">Repeat</keyword>
<proteinExistence type="evidence at transcript level"/>